<gene>
    <name evidence="1" type="primary">rpmE</name>
    <name type="ordered locus">RPC_0796</name>
</gene>
<proteinExistence type="inferred from homology"/>
<protein>
    <recommendedName>
        <fullName evidence="1">Large ribosomal subunit protein bL31</fullName>
    </recommendedName>
    <alternativeName>
        <fullName evidence="2">50S ribosomal protein L31</fullName>
    </alternativeName>
</protein>
<comment type="function">
    <text evidence="1">Binds the 23S rRNA.</text>
</comment>
<comment type="subunit">
    <text evidence="1">Part of the 50S ribosomal subunit.</text>
</comment>
<comment type="similarity">
    <text evidence="1">Belongs to the bacterial ribosomal protein bL31 family. Type A subfamily.</text>
</comment>
<accession>Q21B69</accession>
<name>RL31_RHOPB</name>
<evidence type="ECO:0000255" key="1">
    <source>
        <dbReference type="HAMAP-Rule" id="MF_00501"/>
    </source>
</evidence>
<evidence type="ECO:0000305" key="2"/>
<reference key="1">
    <citation type="submission" date="2006-03" db="EMBL/GenBank/DDBJ databases">
        <title>Complete sequence of Rhodopseudomonas palustris BisB18.</title>
        <authorList>
            <consortium name="US DOE Joint Genome Institute"/>
            <person name="Copeland A."/>
            <person name="Lucas S."/>
            <person name="Lapidus A."/>
            <person name="Barry K."/>
            <person name="Detter J.C."/>
            <person name="Glavina del Rio T."/>
            <person name="Hammon N."/>
            <person name="Israni S."/>
            <person name="Dalin E."/>
            <person name="Tice H."/>
            <person name="Pitluck S."/>
            <person name="Chain P."/>
            <person name="Malfatti S."/>
            <person name="Shin M."/>
            <person name="Vergez L."/>
            <person name="Schmutz J."/>
            <person name="Larimer F."/>
            <person name="Land M."/>
            <person name="Hauser L."/>
            <person name="Pelletier D.A."/>
            <person name="Kyrpides N."/>
            <person name="Anderson I."/>
            <person name="Oda Y."/>
            <person name="Harwood C.S."/>
            <person name="Richardson P."/>
        </authorList>
    </citation>
    <scope>NUCLEOTIDE SEQUENCE [LARGE SCALE GENOMIC DNA]</scope>
    <source>
        <strain>BisB18</strain>
    </source>
</reference>
<keyword id="KW-0687">Ribonucleoprotein</keyword>
<keyword id="KW-0689">Ribosomal protein</keyword>
<keyword id="KW-0694">RNA-binding</keyword>
<keyword id="KW-0699">rRNA-binding</keyword>
<organism>
    <name type="scientific">Rhodopseudomonas palustris (strain BisB18)</name>
    <dbReference type="NCBI Taxonomy" id="316056"/>
    <lineage>
        <taxon>Bacteria</taxon>
        <taxon>Pseudomonadati</taxon>
        <taxon>Pseudomonadota</taxon>
        <taxon>Alphaproteobacteria</taxon>
        <taxon>Hyphomicrobiales</taxon>
        <taxon>Nitrobacteraceae</taxon>
        <taxon>Rhodopseudomonas</taxon>
    </lineage>
</organism>
<dbReference type="EMBL" id="CP000301">
    <property type="protein sequence ID" value="ABD86367.1"/>
    <property type="molecule type" value="Genomic_DNA"/>
</dbReference>
<dbReference type="SMR" id="Q21B69"/>
<dbReference type="STRING" id="316056.RPC_0796"/>
<dbReference type="KEGG" id="rpc:RPC_0796"/>
<dbReference type="eggNOG" id="COG0254">
    <property type="taxonomic scope" value="Bacteria"/>
</dbReference>
<dbReference type="HOGENOM" id="CLU_114306_3_2_5"/>
<dbReference type="OrthoDB" id="9803251at2"/>
<dbReference type="GO" id="GO:1990904">
    <property type="term" value="C:ribonucleoprotein complex"/>
    <property type="evidence" value="ECO:0007669"/>
    <property type="project" value="UniProtKB-KW"/>
</dbReference>
<dbReference type="GO" id="GO:0005840">
    <property type="term" value="C:ribosome"/>
    <property type="evidence" value="ECO:0007669"/>
    <property type="project" value="UniProtKB-KW"/>
</dbReference>
<dbReference type="GO" id="GO:0019843">
    <property type="term" value="F:rRNA binding"/>
    <property type="evidence" value="ECO:0007669"/>
    <property type="project" value="UniProtKB-KW"/>
</dbReference>
<dbReference type="GO" id="GO:0003735">
    <property type="term" value="F:structural constituent of ribosome"/>
    <property type="evidence" value="ECO:0007669"/>
    <property type="project" value="InterPro"/>
</dbReference>
<dbReference type="GO" id="GO:0006412">
    <property type="term" value="P:translation"/>
    <property type="evidence" value="ECO:0007669"/>
    <property type="project" value="UniProtKB-UniRule"/>
</dbReference>
<dbReference type="Gene3D" id="4.10.830.30">
    <property type="entry name" value="Ribosomal protein L31"/>
    <property type="match status" value="1"/>
</dbReference>
<dbReference type="HAMAP" id="MF_00501">
    <property type="entry name" value="Ribosomal_bL31_1"/>
    <property type="match status" value="1"/>
</dbReference>
<dbReference type="InterPro" id="IPR034704">
    <property type="entry name" value="Ribosomal_bL28/bL31-like_sf"/>
</dbReference>
<dbReference type="InterPro" id="IPR002150">
    <property type="entry name" value="Ribosomal_bL31"/>
</dbReference>
<dbReference type="InterPro" id="IPR027491">
    <property type="entry name" value="Ribosomal_bL31_A"/>
</dbReference>
<dbReference type="InterPro" id="IPR042105">
    <property type="entry name" value="Ribosomal_bL31_sf"/>
</dbReference>
<dbReference type="NCBIfam" id="TIGR00105">
    <property type="entry name" value="L31"/>
    <property type="match status" value="1"/>
</dbReference>
<dbReference type="NCBIfam" id="NF001809">
    <property type="entry name" value="PRK00528.1"/>
    <property type="match status" value="1"/>
</dbReference>
<dbReference type="PANTHER" id="PTHR33280">
    <property type="entry name" value="50S RIBOSOMAL PROTEIN L31, CHLOROPLASTIC"/>
    <property type="match status" value="1"/>
</dbReference>
<dbReference type="PANTHER" id="PTHR33280:SF6">
    <property type="entry name" value="LARGE RIBOSOMAL SUBUNIT PROTEIN BL31A"/>
    <property type="match status" value="1"/>
</dbReference>
<dbReference type="Pfam" id="PF01197">
    <property type="entry name" value="Ribosomal_L31"/>
    <property type="match status" value="1"/>
</dbReference>
<dbReference type="PRINTS" id="PR01249">
    <property type="entry name" value="RIBOSOMALL31"/>
</dbReference>
<dbReference type="SUPFAM" id="SSF143800">
    <property type="entry name" value="L28p-like"/>
    <property type="match status" value="1"/>
</dbReference>
<dbReference type="PROSITE" id="PS01143">
    <property type="entry name" value="RIBOSOMAL_L31"/>
    <property type="match status" value="1"/>
</dbReference>
<sequence>MKAEIHPNYHSITVVMTDGTEYVTRSTWGNEGDKLNLDIDSKSHPAWTGGQQQMLDRGGRVSRFQKKFSGFLKKD</sequence>
<feature type="chain" id="PRO_0000259218" description="Large ribosomal subunit protein bL31">
    <location>
        <begin position="1"/>
        <end position="75"/>
    </location>
</feature>